<keyword id="KW-0030">Aminoacyl-tRNA synthetase</keyword>
<keyword id="KW-0067">ATP-binding</keyword>
<keyword id="KW-0963">Cytoplasm</keyword>
<keyword id="KW-0436">Ligase</keyword>
<keyword id="KW-0547">Nucleotide-binding</keyword>
<keyword id="KW-0648">Protein biosynthesis</keyword>
<name>SYL_SYNP6</name>
<protein>
    <recommendedName>
        <fullName evidence="1">Leucine--tRNA ligase</fullName>
        <ecNumber evidence="1">6.1.1.4</ecNumber>
    </recommendedName>
    <alternativeName>
        <fullName evidence="1">Leucyl-tRNA synthetase</fullName>
        <shortName evidence="1">LeuRS</shortName>
    </alternativeName>
</protein>
<dbReference type="EC" id="6.1.1.4" evidence="1"/>
<dbReference type="EMBL" id="AP008231">
    <property type="protein sequence ID" value="BAD80364.1"/>
    <property type="molecule type" value="Genomic_DNA"/>
</dbReference>
<dbReference type="RefSeq" id="WP_011244484.1">
    <property type="nucleotide sequence ID" value="NC_006576.1"/>
</dbReference>
<dbReference type="SMR" id="Q5N006"/>
<dbReference type="KEGG" id="syc:syc2174_d"/>
<dbReference type="eggNOG" id="COG0495">
    <property type="taxonomic scope" value="Bacteria"/>
</dbReference>
<dbReference type="Proteomes" id="UP000001175">
    <property type="component" value="Chromosome"/>
</dbReference>
<dbReference type="GO" id="GO:0005829">
    <property type="term" value="C:cytosol"/>
    <property type="evidence" value="ECO:0007669"/>
    <property type="project" value="TreeGrafter"/>
</dbReference>
<dbReference type="GO" id="GO:0002161">
    <property type="term" value="F:aminoacyl-tRNA deacylase activity"/>
    <property type="evidence" value="ECO:0007669"/>
    <property type="project" value="InterPro"/>
</dbReference>
<dbReference type="GO" id="GO:0005524">
    <property type="term" value="F:ATP binding"/>
    <property type="evidence" value="ECO:0007669"/>
    <property type="project" value="UniProtKB-UniRule"/>
</dbReference>
<dbReference type="GO" id="GO:0004823">
    <property type="term" value="F:leucine-tRNA ligase activity"/>
    <property type="evidence" value="ECO:0007669"/>
    <property type="project" value="UniProtKB-UniRule"/>
</dbReference>
<dbReference type="GO" id="GO:0006429">
    <property type="term" value="P:leucyl-tRNA aminoacylation"/>
    <property type="evidence" value="ECO:0007669"/>
    <property type="project" value="UniProtKB-UniRule"/>
</dbReference>
<dbReference type="CDD" id="cd07958">
    <property type="entry name" value="Anticodon_Ia_Leu_BEm"/>
    <property type="match status" value="1"/>
</dbReference>
<dbReference type="CDD" id="cd00812">
    <property type="entry name" value="LeuRS_core"/>
    <property type="match status" value="1"/>
</dbReference>
<dbReference type="FunFam" id="3.40.50.620:FF:000003">
    <property type="entry name" value="Leucine--tRNA ligase"/>
    <property type="match status" value="1"/>
</dbReference>
<dbReference type="FunFam" id="1.10.730.10:FF:000011">
    <property type="entry name" value="Leucine--tRNA ligase chloroplastic/mitochondrial"/>
    <property type="match status" value="1"/>
</dbReference>
<dbReference type="FunFam" id="3.40.50.620:FF:000100">
    <property type="entry name" value="probable leucine--tRNA ligase, mitochondrial"/>
    <property type="match status" value="1"/>
</dbReference>
<dbReference type="Gene3D" id="3.40.50.620">
    <property type="entry name" value="HUPs"/>
    <property type="match status" value="2"/>
</dbReference>
<dbReference type="Gene3D" id="1.10.730.10">
    <property type="entry name" value="Isoleucyl-tRNA Synthetase, Domain 1"/>
    <property type="match status" value="2"/>
</dbReference>
<dbReference type="HAMAP" id="MF_00049_B">
    <property type="entry name" value="Leu_tRNA_synth_B"/>
    <property type="match status" value="1"/>
</dbReference>
<dbReference type="InterPro" id="IPR001412">
    <property type="entry name" value="aa-tRNA-synth_I_CS"/>
</dbReference>
<dbReference type="InterPro" id="IPR002300">
    <property type="entry name" value="aa-tRNA-synth_Ia"/>
</dbReference>
<dbReference type="InterPro" id="IPR002302">
    <property type="entry name" value="Leu-tRNA-ligase"/>
</dbReference>
<dbReference type="InterPro" id="IPR025709">
    <property type="entry name" value="Leu_tRNA-synth_edit"/>
</dbReference>
<dbReference type="InterPro" id="IPR013155">
    <property type="entry name" value="M/V/L/I-tRNA-synth_anticd-bd"/>
</dbReference>
<dbReference type="InterPro" id="IPR015413">
    <property type="entry name" value="Methionyl/Leucyl_tRNA_Synth"/>
</dbReference>
<dbReference type="InterPro" id="IPR014729">
    <property type="entry name" value="Rossmann-like_a/b/a_fold"/>
</dbReference>
<dbReference type="InterPro" id="IPR009080">
    <property type="entry name" value="tRNAsynth_Ia_anticodon-bd"/>
</dbReference>
<dbReference type="InterPro" id="IPR009008">
    <property type="entry name" value="Val/Leu/Ile-tRNA-synth_edit"/>
</dbReference>
<dbReference type="NCBIfam" id="TIGR00396">
    <property type="entry name" value="leuS_bact"/>
    <property type="match status" value="1"/>
</dbReference>
<dbReference type="PANTHER" id="PTHR43740:SF2">
    <property type="entry name" value="LEUCINE--TRNA LIGASE, MITOCHONDRIAL"/>
    <property type="match status" value="1"/>
</dbReference>
<dbReference type="PANTHER" id="PTHR43740">
    <property type="entry name" value="LEUCYL-TRNA SYNTHETASE"/>
    <property type="match status" value="1"/>
</dbReference>
<dbReference type="Pfam" id="PF08264">
    <property type="entry name" value="Anticodon_1"/>
    <property type="match status" value="1"/>
</dbReference>
<dbReference type="Pfam" id="PF00133">
    <property type="entry name" value="tRNA-synt_1"/>
    <property type="match status" value="2"/>
</dbReference>
<dbReference type="Pfam" id="PF13603">
    <property type="entry name" value="tRNA-synt_1_2"/>
    <property type="match status" value="1"/>
</dbReference>
<dbReference type="Pfam" id="PF09334">
    <property type="entry name" value="tRNA-synt_1g"/>
    <property type="match status" value="1"/>
</dbReference>
<dbReference type="PRINTS" id="PR00985">
    <property type="entry name" value="TRNASYNTHLEU"/>
</dbReference>
<dbReference type="SUPFAM" id="SSF47323">
    <property type="entry name" value="Anticodon-binding domain of a subclass of class I aminoacyl-tRNA synthetases"/>
    <property type="match status" value="1"/>
</dbReference>
<dbReference type="SUPFAM" id="SSF52374">
    <property type="entry name" value="Nucleotidylyl transferase"/>
    <property type="match status" value="1"/>
</dbReference>
<dbReference type="SUPFAM" id="SSF50677">
    <property type="entry name" value="ValRS/IleRS/LeuRS editing domain"/>
    <property type="match status" value="1"/>
</dbReference>
<dbReference type="PROSITE" id="PS00178">
    <property type="entry name" value="AA_TRNA_LIGASE_I"/>
    <property type="match status" value="1"/>
</dbReference>
<comment type="catalytic activity">
    <reaction evidence="1">
        <text>tRNA(Leu) + L-leucine + ATP = L-leucyl-tRNA(Leu) + AMP + diphosphate</text>
        <dbReference type="Rhea" id="RHEA:11688"/>
        <dbReference type="Rhea" id="RHEA-COMP:9613"/>
        <dbReference type="Rhea" id="RHEA-COMP:9622"/>
        <dbReference type="ChEBI" id="CHEBI:30616"/>
        <dbReference type="ChEBI" id="CHEBI:33019"/>
        <dbReference type="ChEBI" id="CHEBI:57427"/>
        <dbReference type="ChEBI" id="CHEBI:78442"/>
        <dbReference type="ChEBI" id="CHEBI:78494"/>
        <dbReference type="ChEBI" id="CHEBI:456215"/>
        <dbReference type="EC" id="6.1.1.4"/>
    </reaction>
</comment>
<comment type="subcellular location">
    <subcellularLocation>
        <location evidence="1">Cytoplasm</location>
    </subcellularLocation>
</comment>
<comment type="similarity">
    <text evidence="1">Belongs to the class-I aminoacyl-tRNA synthetase family.</text>
</comment>
<accession>Q5N006</accession>
<reference key="1">
    <citation type="journal article" date="2007" name="Photosyn. Res.">
        <title>Complete nucleotide sequence of the freshwater unicellular cyanobacterium Synechococcus elongatus PCC 6301 chromosome: gene content and organization.</title>
        <authorList>
            <person name="Sugita C."/>
            <person name="Ogata K."/>
            <person name="Shikata M."/>
            <person name="Jikuya H."/>
            <person name="Takano J."/>
            <person name="Furumichi M."/>
            <person name="Kanehisa M."/>
            <person name="Omata T."/>
            <person name="Sugiura M."/>
            <person name="Sugita M."/>
        </authorList>
    </citation>
    <scope>NUCLEOTIDE SEQUENCE [LARGE SCALE GENOMIC DNA]</scope>
    <source>
        <strain>ATCC 27144 / PCC 6301 / SAUG 1402/1</strain>
    </source>
</reference>
<gene>
    <name evidence="1" type="primary">leuS</name>
    <name type="ordered locus">syc2174_d</name>
</gene>
<evidence type="ECO:0000255" key="1">
    <source>
        <dbReference type="HAMAP-Rule" id="MF_00049"/>
    </source>
</evidence>
<sequence length="865" mass="97356">MQNGANSRSQEYQGVSVDSRYDPQAIETKWQQSWAAAQLDRTPEADDRPKFYALSMFPYPSGNLHMGHVRNYTITDAIARVKRRQGFRVLHAMGWDAFGLPAENAAIDRGVQPADWTYQNVAQMREQLKQLGLSYDWDREVTTCSPDYYRWTQWLFLQFFEAGLAYQKEATVNWDPIDQTVLANEQVDSEGRSWRSGAKVERRQLKQWFLKITDYAEELLQDLDQLTGWPERVRLMQANWIGKSTGAYLEFPIVNSSDRVKVFTTRPDTVYGVSYVVLAPEHPLVTQVTTPEQQTAVAAFAAEVSQTSELERTAEDRPKRGVPTGGFVTNPFTGQAVPIWIADYVLVEYGTGAVMGVPAHDSRDFAFAQRYGLPVQPVIQPTEGAIAEPWPAPFTEAGVMVNSGQFDGLSSTEAKAKIIAFAEEQGWGQAHVQYRLRDWLISRQRYWGCPIPIVHCPDCGPVAAADLPVQLPDSVQFSGRGPSPLAQLEDWVTTTCPSCGKPARRETDTMDTFMCSSWYYLRYSDASNPEIAFTKDKVNDWLPVDQYVGGIEHAILHLLYSRFFTKVLRDRGLLSFDEPFKRLLTQGMVQGLTYKNPKTGKYVPSDRISDPSQPVDPDTGDRLEVFFEKMSKSKYNGVDPARVLDRYGADTARMFILFKAPPEKDLEWDDADVEGQFRFLNRVWRLVQTASQVEATTAADDKAEKDLRRAVHTAIQAFTEDLEEDYQLNTAIAELMKLTNALNDAPMPGSPAYLKGVQTLVLLLAPFAPHIAEELWQQLGGERSVHLEGWPVLDESALIVDEIPLVIQIMGKTRGTITVPASADRDQLQQLAKNSEIAQRWLDGQTIRKVIVVPGKLVNFVIASP</sequence>
<proteinExistence type="inferred from homology"/>
<feature type="chain" id="PRO_0000152103" description="Leucine--tRNA ligase">
    <location>
        <begin position="1"/>
        <end position="865"/>
    </location>
</feature>
<feature type="short sequence motif" description="'HIGH' region">
    <location>
        <begin position="58"/>
        <end position="68"/>
    </location>
</feature>
<feature type="short sequence motif" description="'KMSKS' region">
    <location>
        <begin position="629"/>
        <end position="633"/>
    </location>
</feature>
<feature type="binding site" evidence="1">
    <location>
        <position position="632"/>
    </location>
    <ligand>
        <name>ATP</name>
        <dbReference type="ChEBI" id="CHEBI:30616"/>
    </ligand>
</feature>
<organism>
    <name type="scientific">Synechococcus sp. (strain ATCC 27144 / PCC 6301 / SAUG 1402/1)</name>
    <name type="common">Anacystis nidulans</name>
    <dbReference type="NCBI Taxonomy" id="269084"/>
    <lineage>
        <taxon>Bacteria</taxon>
        <taxon>Bacillati</taxon>
        <taxon>Cyanobacteriota</taxon>
        <taxon>Cyanophyceae</taxon>
        <taxon>Synechococcales</taxon>
        <taxon>Synechococcaceae</taxon>
        <taxon>Synechococcus</taxon>
    </lineage>
</organism>